<evidence type="ECO:0000255" key="1">
    <source>
        <dbReference type="HAMAP-Rule" id="MF_00059"/>
    </source>
</evidence>
<keyword id="KW-0240">DNA-directed RNA polymerase</keyword>
<keyword id="KW-0548">Nucleotidyltransferase</keyword>
<keyword id="KW-0804">Transcription</keyword>
<keyword id="KW-0808">Transferase</keyword>
<feature type="chain" id="PRO_0000225300" description="DNA-directed RNA polymerase subunit alpha">
    <location>
        <begin position="1"/>
        <end position="329"/>
    </location>
</feature>
<feature type="region of interest" description="Alpha N-terminal domain (alpha-NTD)" evidence="1">
    <location>
        <begin position="1"/>
        <end position="235"/>
    </location>
</feature>
<feature type="region of interest" description="Alpha C-terminal domain (alpha-CTD)" evidence="1">
    <location>
        <begin position="249"/>
        <end position="329"/>
    </location>
</feature>
<gene>
    <name evidence="1" type="primary">rpoA</name>
    <name type="ordered locus">SBO_3289</name>
</gene>
<proteinExistence type="inferred from homology"/>
<dbReference type="EC" id="2.7.7.6" evidence="1"/>
<dbReference type="EMBL" id="CP000036">
    <property type="protein sequence ID" value="ABB67777.1"/>
    <property type="molecule type" value="Genomic_DNA"/>
</dbReference>
<dbReference type="RefSeq" id="WP_001162094.1">
    <property type="nucleotide sequence ID" value="NC_007613.1"/>
</dbReference>
<dbReference type="SMR" id="Q31VY1"/>
<dbReference type="GeneID" id="93778692"/>
<dbReference type="KEGG" id="sbo:SBO_3289"/>
<dbReference type="HOGENOM" id="CLU_053084_0_0_6"/>
<dbReference type="Proteomes" id="UP000007067">
    <property type="component" value="Chromosome"/>
</dbReference>
<dbReference type="GO" id="GO:0005737">
    <property type="term" value="C:cytoplasm"/>
    <property type="evidence" value="ECO:0007669"/>
    <property type="project" value="UniProtKB-ARBA"/>
</dbReference>
<dbReference type="GO" id="GO:0000428">
    <property type="term" value="C:DNA-directed RNA polymerase complex"/>
    <property type="evidence" value="ECO:0007669"/>
    <property type="project" value="UniProtKB-KW"/>
</dbReference>
<dbReference type="GO" id="GO:0003677">
    <property type="term" value="F:DNA binding"/>
    <property type="evidence" value="ECO:0007669"/>
    <property type="project" value="UniProtKB-UniRule"/>
</dbReference>
<dbReference type="GO" id="GO:0003899">
    <property type="term" value="F:DNA-directed RNA polymerase activity"/>
    <property type="evidence" value="ECO:0007669"/>
    <property type="project" value="UniProtKB-UniRule"/>
</dbReference>
<dbReference type="GO" id="GO:0046983">
    <property type="term" value="F:protein dimerization activity"/>
    <property type="evidence" value="ECO:0007669"/>
    <property type="project" value="InterPro"/>
</dbReference>
<dbReference type="GO" id="GO:0006351">
    <property type="term" value="P:DNA-templated transcription"/>
    <property type="evidence" value="ECO:0007669"/>
    <property type="project" value="UniProtKB-UniRule"/>
</dbReference>
<dbReference type="CDD" id="cd06928">
    <property type="entry name" value="RNAP_alpha_NTD"/>
    <property type="match status" value="1"/>
</dbReference>
<dbReference type="FunFam" id="1.10.150.20:FF:000001">
    <property type="entry name" value="DNA-directed RNA polymerase subunit alpha"/>
    <property type="match status" value="1"/>
</dbReference>
<dbReference type="FunFam" id="2.170.120.12:FF:000001">
    <property type="entry name" value="DNA-directed RNA polymerase subunit alpha"/>
    <property type="match status" value="1"/>
</dbReference>
<dbReference type="Gene3D" id="1.10.150.20">
    <property type="entry name" value="5' to 3' exonuclease, C-terminal subdomain"/>
    <property type="match status" value="1"/>
</dbReference>
<dbReference type="Gene3D" id="2.170.120.12">
    <property type="entry name" value="DNA-directed RNA polymerase, insert domain"/>
    <property type="match status" value="1"/>
</dbReference>
<dbReference type="Gene3D" id="3.30.1360.10">
    <property type="entry name" value="RNA polymerase, RBP11-like subunit"/>
    <property type="match status" value="1"/>
</dbReference>
<dbReference type="HAMAP" id="MF_00059">
    <property type="entry name" value="RNApol_bact_RpoA"/>
    <property type="match status" value="1"/>
</dbReference>
<dbReference type="InterPro" id="IPR011262">
    <property type="entry name" value="DNA-dir_RNA_pol_insert"/>
</dbReference>
<dbReference type="InterPro" id="IPR011263">
    <property type="entry name" value="DNA-dir_RNA_pol_RpoA/D/Rpb3"/>
</dbReference>
<dbReference type="InterPro" id="IPR011773">
    <property type="entry name" value="DNA-dir_RpoA"/>
</dbReference>
<dbReference type="InterPro" id="IPR036603">
    <property type="entry name" value="RBP11-like"/>
</dbReference>
<dbReference type="InterPro" id="IPR011260">
    <property type="entry name" value="RNAP_asu_C"/>
</dbReference>
<dbReference type="InterPro" id="IPR036643">
    <property type="entry name" value="RNApol_insert_sf"/>
</dbReference>
<dbReference type="NCBIfam" id="NF003513">
    <property type="entry name" value="PRK05182.1-2"/>
    <property type="match status" value="1"/>
</dbReference>
<dbReference type="NCBIfam" id="NF003519">
    <property type="entry name" value="PRK05182.2-5"/>
    <property type="match status" value="1"/>
</dbReference>
<dbReference type="NCBIfam" id="TIGR02027">
    <property type="entry name" value="rpoA"/>
    <property type="match status" value="1"/>
</dbReference>
<dbReference type="Pfam" id="PF01000">
    <property type="entry name" value="RNA_pol_A_bac"/>
    <property type="match status" value="1"/>
</dbReference>
<dbReference type="Pfam" id="PF03118">
    <property type="entry name" value="RNA_pol_A_CTD"/>
    <property type="match status" value="1"/>
</dbReference>
<dbReference type="Pfam" id="PF01193">
    <property type="entry name" value="RNA_pol_L"/>
    <property type="match status" value="1"/>
</dbReference>
<dbReference type="SMART" id="SM00662">
    <property type="entry name" value="RPOLD"/>
    <property type="match status" value="1"/>
</dbReference>
<dbReference type="SUPFAM" id="SSF47789">
    <property type="entry name" value="C-terminal domain of RNA polymerase alpha subunit"/>
    <property type="match status" value="1"/>
</dbReference>
<dbReference type="SUPFAM" id="SSF56553">
    <property type="entry name" value="Insert subdomain of RNA polymerase alpha subunit"/>
    <property type="match status" value="1"/>
</dbReference>
<dbReference type="SUPFAM" id="SSF55257">
    <property type="entry name" value="RBP11-like subunits of RNA polymerase"/>
    <property type="match status" value="1"/>
</dbReference>
<accession>Q31VY1</accession>
<comment type="function">
    <text evidence="1">DNA-dependent RNA polymerase catalyzes the transcription of DNA into RNA using the four ribonucleoside triphosphates as substrates.</text>
</comment>
<comment type="catalytic activity">
    <reaction evidence="1">
        <text>RNA(n) + a ribonucleoside 5'-triphosphate = RNA(n+1) + diphosphate</text>
        <dbReference type="Rhea" id="RHEA:21248"/>
        <dbReference type="Rhea" id="RHEA-COMP:14527"/>
        <dbReference type="Rhea" id="RHEA-COMP:17342"/>
        <dbReference type="ChEBI" id="CHEBI:33019"/>
        <dbReference type="ChEBI" id="CHEBI:61557"/>
        <dbReference type="ChEBI" id="CHEBI:140395"/>
        <dbReference type="EC" id="2.7.7.6"/>
    </reaction>
</comment>
<comment type="subunit">
    <text evidence="1">Homodimer. The RNAP catalytic core consists of 2 alpha, 1 beta, 1 beta' and 1 omega subunit. When a sigma factor is associated with the core the holoenzyme is formed, which can initiate transcription.</text>
</comment>
<comment type="domain">
    <text evidence="1">The N-terminal domain is essential for RNAP assembly and basal transcription, whereas the C-terminal domain is involved in interaction with transcriptional regulators and with upstream promoter elements.</text>
</comment>
<comment type="similarity">
    <text evidence="1">Belongs to the RNA polymerase alpha chain family.</text>
</comment>
<name>RPOA_SHIBS</name>
<protein>
    <recommendedName>
        <fullName evidence="1">DNA-directed RNA polymerase subunit alpha</fullName>
        <shortName evidence="1">RNAP subunit alpha</shortName>
        <ecNumber evidence="1">2.7.7.6</ecNumber>
    </recommendedName>
    <alternativeName>
        <fullName evidence="1">RNA polymerase subunit alpha</fullName>
    </alternativeName>
    <alternativeName>
        <fullName evidence="1">Transcriptase subunit alpha</fullName>
    </alternativeName>
</protein>
<sequence length="329" mass="36512">MQGSVTEFLKPRLVDIEQVSSTHAKVTLEPLERGFGHTLGNALRRILLSSMPGCAVTEVEIDGVLHEYSTKEGVQEDILEILLNLKGLAVRVQGKDEVILTLNKSGIGPVTAADITHDGDVEIVKPQHVICHLTDENASISMRIKVQRGRGYVPASTRIHSEEDERPIGRLLVDACYSPVERIAYNVEAARVEQRTDLDKLVIEMETNGTIDPEEAIRRAATILAEQLEAFVDLRDVRQPEVKEEKPEFDPILLRPVDDLELTVRSANCLKAEAIHYIGDLVQRTEVELLKTPNLGKKSLTEIKDVLASRGLSLGMRLENWPPASIADE</sequence>
<organism>
    <name type="scientific">Shigella boydii serotype 4 (strain Sb227)</name>
    <dbReference type="NCBI Taxonomy" id="300268"/>
    <lineage>
        <taxon>Bacteria</taxon>
        <taxon>Pseudomonadati</taxon>
        <taxon>Pseudomonadota</taxon>
        <taxon>Gammaproteobacteria</taxon>
        <taxon>Enterobacterales</taxon>
        <taxon>Enterobacteriaceae</taxon>
        <taxon>Shigella</taxon>
    </lineage>
</organism>
<reference key="1">
    <citation type="journal article" date="2005" name="Nucleic Acids Res.">
        <title>Genome dynamics and diversity of Shigella species, the etiologic agents of bacillary dysentery.</title>
        <authorList>
            <person name="Yang F."/>
            <person name="Yang J."/>
            <person name="Zhang X."/>
            <person name="Chen L."/>
            <person name="Jiang Y."/>
            <person name="Yan Y."/>
            <person name="Tang X."/>
            <person name="Wang J."/>
            <person name="Xiong Z."/>
            <person name="Dong J."/>
            <person name="Xue Y."/>
            <person name="Zhu Y."/>
            <person name="Xu X."/>
            <person name="Sun L."/>
            <person name="Chen S."/>
            <person name="Nie H."/>
            <person name="Peng J."/>
            <person name="Xu J."/>
            <person name="Wang Y."/>
            <person name="Yuan Z."/>
            <person name="Wen Y."/>
            <person name="Yao Z."/>
            <person name="Shen Y."/>
            <person name="Qiang B."/>
            <person name="Hou Y."/>
            <person name="Yu J."/>
            <person name="Jin Q."/>
        </authorList>
    </citation>
    <scope>NUCLEOTIDE SEQUENCE [LARGE SCALE GENOMIC DNA]</scope>
    <source>
        <strain>Sb227</strain>
    </source>
</reference>